<name>RS18_PARDP</name>
<accession>A1B0F7</accession>
<feature type="chain" id="PRO_1000003552" description="Small ribosomal subunit protein bS18">
    <location>
        <begin position="1"/>
        <end position="75"/>
    </location>
</feature>
<evidence type="ECO:0000255" key="1">
    <source>
        <dbReference type="HAMAP-Rule" id="MF_00270"/>
    </source>
</evidence>
<evidence type="ECO:0000305" key="2"/>
<sequence>MANKPFFRRRKVCPFSGDNAPAIDYKDTRLLQRYISERGKIVPSRITAVSAKKQRELARAIKRARFLALLPYAVK</sequence>
<comment type="function">
    <text evidence="1">Binds as a heterodimer with protein bS6 to the central domain of the 16S rRNA, where it helps stabilize the platform of the 30S subunit.</text>
</comment>
<comment type="subunit">
    <text evidence="1">Part of the 30S ribosomal subunit. Forms a tight heterodimer with protein bS6.</text>
</comment>
<comment type="similarity">
    <text evidence="1">Belongs to the bacterial ribosomal protein bS18 family.</text>
</comment>
<organism>
    <name type="scientific">Paracoccus denitrificans (strain Pd 1222)</name>
    <dbReference type="NCBI Taxonomy" id="318586"/>
    <lineage>
        <taxon>Bacteria</taxon>
        <taxon>Pseudomonadati</taxon>
        <taxon>Pseudomonadota</taxon>
        <taxon>Alphaproteobacteria</taxon>
        <taxon>Rhodobacterales</taxon>
        <taxon>Paracoccaceae</taxon>
        <taxon>Paracoccus</taxon>
    </lineage>
</organism>
<proteinExistence type="inferred from homology"/>
<keyword id="KW-1185">Reference proteome</keyword>
<keyword id="KW-0687">Ribonucleoprotein</keyword>
<keyword id="KW-0689">Ribosomal protein</keyword>
<keyword id="KW-0694">RNA-binding</keyword>
<keyword id="KW-0699">rRNA-binding</keyword>
<gene>
    <name evidence="1" type="primary">rpsR</name>
    <name type="ordered locus">Pden_0890</name>
</gene>
<protein>
    <recommendedName>
        <fullName evidence="1">Small ribosomal subunit protein bS18</fullName>
    </recommendedName>
    <alternativeName>
        <fullName evidence="2">30S ribosomal protein S18</fullName>
    </alternativeName>
</protein>
<reference key="1">
    <citation type="submission" date="2006-12" db="EMBL/GenBank/DDBJ databases">
        <title>Complete sequence of chromosome 1 of Paracoccus denitrificans PD1222.</title>
        <authorList>
            <person name="Copeland A."/>
            <person name="Lucas S."/>
            <person name="Lapidus A."/>
            <person name="Barry K."/>
            <person name="Detter J.C."/>
            <person name="Glavina del Rio T."/>
            <person name="Hammon N."/>
            <person name="Israni S."/>
            <person name="Dalin E."/>
            <person name="Tice H."/>
            <person name="Pitluck S."/>
            <person name="Munk A.C."/>
            <person name="Brettin T."/>
            <person name="Bruce D."/>
            <person name="Han C."/>
            <person name="Tapia R."/>
            <person name="Gilna P."/>
            <person name="Schmutz J."/>
            <person name="Larimer F."/>
            <person name="Land M."/>
            <person name="Hauser L."/>
            <person name="Kyrpides N."/>
            <person name="Lykidis A."/>
            <person name="Spiro S."/>
            <person name="Richardson D.J."/>
            <person name="Moir J.W.B."/>
            <person name="Ferguson S.J."/>
            <person name="van Spanning R.J.M."/>
            <person name="Richardson P."/>
        </authorList>
    </citation>
    <scope>NUCLEOTIDE SEQUENCE [LARGE SCALE GENOMIC DNA]</scope>
    <source>
        <strain>Pd 1222</strain>
    </source>
</reference>
<dbReference type="EMBL" id="CP000489">
    <property type="protein sequence ID" value="ABL69001.1"/>
    <property type="molecule type" value="Genomic_DNA"/>
</dbReference>
<dbReference type="RefSeq" id="WP_011747229.1">
    <property type="nucleotide sequence ID" value="NC_008686.1"/>
</dbReference>
<dbReference type="SMR" id="A1B0F7"/>
<dbReference type="STRING" id="318586.Pden_0890"/>
<dbReference type="EnsemblBacteria" id="ABL69001">
    <property type="protein sequence ID" value="ABL69001"/>
    <property type="gene ID" value="Pden_0890"/>
</dbReference>
<dbReference type="GeneID" id="93452112"/>
<dbReference type="KEGG" id="pde:Pden_0890"/>
<dbReference type="eggNOG" id="COG0238">
    <property type="taxonomic scope" value="Bacteria"/>
</dbReference>
<dbReference type="HOGENOM" id="CLU_148710_2_3_5"/>
<dbReference type="OrthoDB" id="9812008at2"/>
<dbReference type="Proteomes" id="UP000000361">
    <property type="component" value="Chromosome 1"/>
</dbReference>
<dbReference type="GO" id="GO:0022627">
    <property type="term" value="C:cytosolic small ribosomal subunit"/>
    <property type="evidence" value="ECO:0007669"/>
    <property type="project" value="TreeGrafter"/>
</dbReference>
<dbReference type="GO" id="GO:0070181">
    <property type="term" value="F:small ribosomal subunit rRNA binding"/>
    <property type="evidence" value="ECO:0007669"/>
    <property type="project" value="TreeGrafter"/>
</dbReference>
<dbReference type="GO" id="GO:0003735">
    <property type="term" value="F:structural constituent of ribosome"/>
    <property type="evidence" value="ECO:0007669"/>
    <property type="project" value="InterPro"/>
</dbReference>
<dbReference type="GO" id="GO:0006412">
    <property type="term" value="P:translation"/>
    <property type="evidence" value="ECO:0007669"/>
    <property type="project" value="UniProtKB-UniRule"/>
</dbReference>
<dbReference type="Gene3D" id="4.10.640.10">
    <property type="entry name" value="Ribosomal protein S18"/>
    <property type="match status" value="1"/>
</dbReference>
<dbReference type="HAMAP" id="MF_00270">
    <property type="entry name" value="Ribosomal_bS18"/>
    <property type="match status" value="1"/>
</dbReference>
<dbReference type="InterPro" id="IPR001648">
    <property type="entry name" value="Ribosomal_bS18"/>
</dbReference>
<dbReference type="InterPro" id="IPR018275">
    <property type="entry name" value="Ribosomal_bS18_CS"/>
</dbReference>
<dbReference type="InterPro" id="IPR036870">
    <property type="entry name" value="Ribosomal_bS18_sf"/>
</dbReference>
<dbReference type="NCBIfam" id="TIGR00165">
    <property type="entry name" value="S18"/>
    <property type="match status" value="1"/>
</dbReference>
<dbReference type="PANTHER" id="PTHR13479">
    <property type="entry name" value="30S RIBOSOMAL PROTEIN S18"/>
    <property type="match status" value="1"/>
</dbReference>
<dbReference type="PANTHER" id="PTHR13479:SF40">
    <property type="entry name" value="SMALL RIBOSOMAL SUBUNIT PROTEIN BS18M"/>
    <property type="match status" value="1"/>
</dbReference>
<dbReference type="Pfam" id="PF01084">
    <property type="entry name" value="Ribosomal_S18"/>
    <property type="match status" value="1"/>
</dbReference>
<dbReference type="PRINTS" id="PR00974">
    <property type="entry name" value="RIBOSOMALS18"/>
</dbReference>
<dbReference type="SUPFAM" id="SSF46911">
    <property type="entry name" value="Ribosomal protein S18"/>
    <property type="match status" value="1"/>
</dbReference>
<dbReference type="PROSITE" id="PS00057">
    <property type="entry name" value="RIBOSOMAL_S18"/>
    <property type="match status" value="1"/>
</dbReference>